<feature type="chain" id="PRO_0000319942" description="Zinc finger protein 385C">
    <location>
        <begin position="1"/>
        <end position="429"/>
    </location>
</feature>
<feature type="zinc finger region" description="Matrin-type 1">
    <location>
        <begin position="77"/>
        <end position="107"/>
    </location>
</feature>
<feature type="zinc finger region" description="Matrin-type 2">
    <location>
        <begin position="225"/>
        <end position="259"/>
    </location>
</feature>
<feature type="zinc finger region" description="Matrin-type 3">
    <location>
        <begin position="297"/>
        <end position="327"/>
    </location>
</feature>
<feature type="region of interest" description="Disordered" evidence="3">
    <location>
        <begin position="109"/>
        <end position="224"/>
    </location>
</feature>
<feature type="region of interest" description="Disordered" evidence="3">
    <location>
        <begin position="258"/>
        <end position="295"/>
    </location>
</feature>
<feature type="region of interest" description="Disordered" evidence="3">
    <location>
        <begin position="311"/>
        <end position="340"/>
    </location>
</feature>
<feature type="compositionally biased region" description="Low complexity" evidence="3">
    <location>
        <begin position="125"/>
        <end position="146"/>
    </location>
</feature>
<feature type="compositionally biased region" description="Pro residues" evidence="3">
    <location>
        <begin position="147"/>
        <end position="162"/>
    </location>
</feature>
<feature type="compositionally biased region" description="Low complexity" evidence="3">
    <location>
        <begin position="181"/>
        <end position="193"/>
    </location>
</feature>
<feature type="compositionally biased region" description="Basic residues" evidence="3">
    <location>
        <begin position="262"/>
        <end position="284"/>
    </location>
</feature>
<feature type="splice variant" id="VSP_031547" description="In isoform 2." evidence="4">
    <original>L</original>
    <variation>LA</variation>
    <location>
        <position position="3"/>
    </location>
</feature>
<feature type="sequence conflict" description="In Ref. 1; BAC31860 and 3; AAI16727." evidence="5" ref="1 3">
    <original>R</original>
    <variation>C</variation>
    <location>
        <position position="269"/>
    </location>
</feature>
<feature type="sequence conflict" description="In Ref. 1; BAC31860 and 3; AAI16727." evidence="5" ref="1 3">
    <original>N</original>
    <variation>S</variation>
    <location>
        <position position="337"/>
    </location>
</feature>
<comment type="subcellular location">
    <subcellularLocation>
        <location evidence="1">Nucleus</location>
    </subcellularLocation>
</comment>
<comment type="alternative products">
    <event type="alternative splicing"/>
    <isoform>
        <id>A2A5E6-1</id>
        <name>1</name>
        <sequence type="displayed"/>
    </isoform>
    <isoform>
        <id>A2A5E6-2</id>
        <name>2</name>
        <sequence type="described" ref="VSP_031547"/>
    </isoform>
</comment>
<accession>A2A5E6</accession>
<accession>Q14AS5</accession>
<accession>Q8C8X1</accession>
<sequence length="429" mass="44644">MLLGPASGSPSPLLASLTLPARPLQPPLDLKHLLAFHLNGTTPLSLFPNFSTMDPVQKAVISHTFGVPSPLKKKLFISCNICHLRFNSANQAEAHYKGHRHARKLKAVEAAKSKQRPRNPTTNGTVVSSASPPASGSPGTPQSKGPASPPLGPSLQLPPTPDPSAGDPVHSAGDPVHSELCDAAASSSSSSCPPCSPDPSREAPGPEPAEGAVGSGVNGEGRGEKGRLYCPTCKVTVNSASQLQAHNTGAKHRWMVEGHQGAPRRGRGRPVSRGGTGHKTKRVIGNRGGRQGPSPPFHCALCQLHVNSETQLKQHMSSRRHKDRLAGKPPKSSSQHNKLQKHTALAVSVLKSKLALQKQLTKTLAARFLPGPLPTTAAAICALPGPLTLRPAATAAATLFPAPVLGPALFRSPAGAVRPAAGPILFAPY</sequence>
<name>Z385C_MOUSE</name>
<dbReference type="EMBL" id="AK044299">
    <property type="protein sequence ID" value="BAC31860.1"/>
    <property type="molecule type" value="mRNA"/>
</dbReference>
<dbReference type="EMBL" id="AL591469">
    <property type="status" value="NOT_ANNOTATED_CDS"/>
    <property type="molecule type" value="Genomic_DNA"/>
</dbReference>
<dbReference type="EMBL" id="BC116726">
    <property type="protein sequence ID" value="AAI16727.1"/>
    <property type="molecule type" value="mRNA"/>
</dbReference>
<dbReference type="CCDS" id="CCDS25430.1">
    <molecule id="A2A5E6-1"/>
</dbReference>
<dbReference type="RefSeq" id="NP_808458.2">
    <molecule id="A2A5E6-1"/>
    <property type="nucleotide sequence ID" value="NM_177790.4"/>
</dbReference>
<dbReference type="RefSeq" id="XP_006533557.1">
    <property type="nucleotide sequence ID" value="XM_006533494.3"/>
</dbReference>
<dbReference type="FunCoup" id="A2A5E6">
    <property type="interactions" value="815"/>
</dbReference>
<dbReference type="STRING" id="10090.ENSMUSP00000099408"/>
<dbReference type="GlyGen" id="A2A5E6">
    <property type="glycosylation" value="1 site"/>
</dbReference>
<dbReference type="PhosphoSitePlus" id="A2A5E6"/>
<dbReference type="PaxDb" id="10090-ENSMUSP00000099408"/>
<dbReference type="ProteomicsDB" id="302098">
    <molecule id="A2A5E6-1"/>
</dbReference>
<dbReference type="ProteomicsDB" id="302099">
    <molecule id="A2A5E6-2"/>
</dbReference>
<dbReference type="Antibodypedia" id="29099">
    <property type="antibodies" value="37 antibodies from 8 providers"/>
</dbReference>
<dbReference type="DNASU" id="278304"/>
<dbReference type="Ensembl" id="ENSMUST00000103119.10">
    <molecule id="A2A5E6-1"/>
    <property type="protein sequence ID" value="ENSMUSP00000099408.4"/>
    <property type="gene ID" value="ENSMUSG00000014198.16"/>
</dbReference>
<dbReference type="GeneID" id="278304"/>
<dbReference type="KEGG" id="mmu:278304"/>
<dbReference type="UCSC" id="uc007llv.2">
    <molecule id="A2A5E6-1"/>
    <property type="organism name" value="mouse"/>
</dbReference>
<dbReference type="UCSC" id="uc011yfc.1">
    <molecule id="A2A5E6-2"/>
    <property type="organism name" value="mouse"/>
</dbReference>
<dbReference type="AGR" id="MGI:3608347"/>
<dbReference type="CTD" id="278304"/>
<dbReference type="MGI" id="MGI:3608347">
    <property type="gene designation" value="Zfp385c"/>
</dbReference>
<dbReference type="VEuPathDB" id="HostDB:ENSMUSG00000014198"/>
<dbReference type="eggNOG" id="ENOG502QTBM">
    <property type="taxonomic scope" value="Eukaryota"/>
</dbReference>
<dbReference type="GeneTree" id="ENSGT00940000157202"/>
<dbReference type="HOGENOM" id="CLU_027876_0_0_1"/>
<dbReference type="InParanoid" id="A2A5E6"/>
<dbReference type="OMA" id="HNTGARH"/>
<dbReference type="OrthoDB" id="434647at2759"/>
<dbReference type="PhylomeDB" id="A2A5E6"/>
<dbReference type="TreeFam" id="TF326622"/>
<dbReference type="BioGRID-ORCS" id="278304">
    <property type="hits" value="8 hits in 77 CRISPR screens"/>
</dbReference>
<dbReference type="ChiTaRS" id="Zfp385c">
    <property type="organism name" value="mouse"/>
</dbReference>
<dbReference type="PRO" id="PR:A2A5E6"/>
<dbReference type="Proteomes" id="UP000000589">
    <property type="component" value="Chromosome 11"/>
</dbReference>
<dbReference type="RNAct" id="A2A5E6">
    <property type="molecule type" value="protein"/>
</dbReference>
<dbReference type="Bgee" id="ENSMUSG00000014198">
    <property type="expression patterns" value="Expressed in extra-ocular muscle and 49 other cell types or tissues"/>
</dbReference>
<dbReference type="ExpressionAtlas" id="A2A5E6">
    <property type="expression patterns" value="baseline and differential"/>
</dbReference>
<dbReference type="GO" id="GO:0005634">
    <property type="term" value="C:nucleus"/>
    <property type="evidence" value="ECO:0007669"/>
    <property type="project" value="UniProtKB-SubCell"/>
</dbReference>
<dbReference type="GO" id="GO:0003676">
    <property type="term" value="F:nucleic acid binding"/>
    <property type="evidence" value="ECO:0007669"/>
    <property type="project" value="InterPro"/>
</dbReference>
<dbReference type="GO" id="GO:0008270">
    <property type="term" value="F:zinc ion binding"/>
    <property type="evidence" value="ECO:0007669"/>
    <property type="project" value="UniProtKB-KW"/>
</dbReference>
<dbReference type="Gene3D" id="3.30.160.60">
    <property type="entry name" value="Classic Zinc Finger"/>
    <property type="match status" value="3"/>
</dbReference>
<dbReference type="InterPro" id="IPR003604">
    <property type="entry name" value="Matrin/U1-like-C_Znf_C2H2"/>
</dbReference>
<dbReference type="InterPro" id="IPR051845">
    <property type="entry name" value="Znf385"/>
</dbReference>
<dbReference type="InterPro" id="IPR036236">
    <property type="entry name" value="Znf_C2H2_sf"/>
</dbReference>
<dbReference type="InterPro" id="IPR013087">
    <property type="entry name" value="Znf_C2H2_type"/>
</dbReference>
<dbReference type="PANTHER" id="PTHR23067">
    <property type="entry name" value="DOUBLE-STRANDED RNA-BINDING ZINC FINGER PROTEIN"/>
    <property type="match status" value="1"/>
</dbReference>
<dbReference type="PANTHER" id="PTHR23067:SF6">
    <property type="entry name" value="ZINC FINGER PROTEIN 385C"/>
    <property type="match status" value="1"/>
</dbReference>
<dbReference type="Pfam" id="PF12874">
    <property type="entry name" value="zf-met"/>
    <property type="match status" value="3"/>
</dbReference>
<dbReference type="SMART" id="SM00355">
    <property type="entry name" value="ZnF_C2H2"/>
    <property type="match status" value="3"/>
</dbReference>
<dbReference type="SMART" id="SM00451">
    <property type="entry name" value="ZnF_U1"/>
    <property type="match status" value="3"/>
</dbReference>
<dbReference type="SUPFAM" id="SSF57667">
    <property type="entry name" value="beta-beta-alpha zinc fingers"/>
    <property type="match status" value="3"/>
</dbReference>
<evidence type="ECO:0000250" key="1"/>
<evidence type="ECO:0000250" key="2">
    <source>
        <dbReference type="UniProtKB" id="Q66K41"/>
    </source>
</evidence>
<evidence type="ECO:0000256" key="3">
    <source>
        <dbReference type="SAM" id="MobiDB-lite"/>
    </source>
</evidence>
<evidence type="ECO:0000303" key="4">
    <source>
    </source>
</evidence>
<evidence type="ECO:0000305" key="5"/>
<evidence type="ECO:0000312" key="6">
    <source>
        <dbReference type="MGI" id="MGI:3608347"/>
    </source>
</evidence>
<protein>
    <recommendedName>
        <fullName evidence="5">Zinc finger protein 385C</fullName>
    </recommendedName>
</protein>
<gene>
    <name evidence="2" type="primary">Znf385c</name>
    <name evidence="6" type="synonym">Zfp385c</name>
</gene>
<organism>
    <name type="scientific">Mus musculus</name>
    <name type="common">Mouse</name>
    <dbReference type="NCBI Taxonomy" id="10090"/>
    <lineage>
        <taxon>Eukaryota</taxon>
        <taxon>Metazoa</taxon>
        <taxon>Chordata</taxon>
        <taxon>Craniata</taxon>
        <taxon>Vertebrata</taxon>
        <taxon>Euteleostomi</taxon>
        <taxon>Mammalia</taxon>
        <taxon>Eutheria</taxon>
        <taxon>Euarchontoglires</taxon>
        <taxon>Glires</taxon>
        <taxon>Rodentia</taxon>
        <taxon>Myomorpha</taxon>
        <taxon>Muroidea</taxon>
        <taxon>Muridae</taxon>
        <taxon>Murinae</taxon>
        <taxon>Mus</taxon>
        <taxon>Mus</taxon>
    </lineage>
</organism>
<reference key="1">
    <citation type="journal article" date="2005" name="Science">
        <title>The transcriptional landscape of the mammalian genome.</title>
        <authorList>
            <person name="Carninci P."/>
            <person name="Kasukawa T."/>
            <person name="Katayama S."/>
            <person name="Gough J."/>
            <person name="Frith M.C."/>
            <person name="Maeda N."/>
            <person name="Oyama R."/>
            <person name="Ravasi T."/>
            <person name="Lenhard B."/>
            <person name="Wells C."/>
            <person name="Kodzius R."/>
            <person name="Shimokawa K."/>
            <person name="Bajic V.B."/>
            <person name="Brenner S.E."/>
            <person name="Batalov S."/>
            <person name="Forrest A.R."/>
            <person name="Zavolan M."/>
            <person name="Davis M.J."/>
            <person name="Wilming L.G."/>
            <person name="Aidinis V."/>
            <person name="Allen J.E."/>
            <person name="Ambesi-Impiombato A."/>
            <person name="Apweiler R."/>
            <person name="Aturaliya R.N."/>
            <person name="Bailey T.L."/>
            <person name="Bansal M."/>
            <person name="Baxter L."/>
            <person name="Beisel K.W."/>
            <person name="Bersano T."/>
            <person name="Bono H."/>
            <person name="Chalk A.M."/>
            <person name="Chiu K.P."/>
            <person name="Choudhary V."/>
            <person name="Christoffels A."/>
            <person name="Clutterbuck D.R."/>
            <person name="Crowe M.L."/>
            <person name="Dalla E."/>
            <person name="Dalrymple B.P."/>
            <person name="de Bono B."/>
            <person name="Della Gatta G."/>
            <person name="di Bernardo D."/>
            <person name="Down T."/>
            <person name="Engstrom P."/>
            <person name="Fagiolini M."/>
            <person name="Faulkner G."/>
            <person name="Fletcher C.F."/>
            <person name="Fukushima T."/>
            <person name="Furuno M."/>
            <person name="Futaki S."/>
            <person name="Gariboldi M."/>
            <person name="Georgii-Hemming P."/>
            <person name="Gingeras T.R."/>
            <person name="Gojobori T."/>
            <person name="Green R.E."/>
            <person name="Gustincich S."/>
            <person name="Harbers M."/>
            <person name="Hayashi Y."/>
            <person name="Hensch T.K."/>
            <person name="Hirokawa N."/>
            <person name="Hill D."/>
            <person name="Huminiecki L."/>
            <person name="Iacono M."/>
            <person name="Ikeo K."/>
            <person name="Iwama A."/>
            <person name="Ishikawa T."/>
            <person name="Jakt M."/>
            <person name="Kanapin A."/>
            <person name="Katoh M."/>
            <person name="Kawasawa Y."/>
            <person name="Kelso J."/>
            <person name="Kitamura H."/>
            <person name="Kitano H."/>
            <person name="Kollias G."/>
            <person name="Krishnan S.P."/>
            <person name="Kruger A."/>
            <person name="Kummerfeld S.K."/>
            <person name="Kurochkin I.V."/>
            <person name="Lareau L.F."/>
            <person name="Lazarevic D."/>
            <person name="Lipovich L."/>
            <person name="Liu J."/>
            <person name="Liuni S."/>
            <person name="McWilliam S."/>
            <person name="Madan Babu M."/>
            <person name="Madera M."/>
            <person name="Marchionni L."/>
            <person name="Matsuda H."/>
            <person name="Matsuzawa S."/>
            <person name="Miki H."/>
            <person name="Mignone F."/>
            <person name="Miyake S."/>
            <person name="Morris K."/>
            <person name="Mottagui-Tabar S."/>
            <person name="Mulder N."/>
            <person name="Nakano N."/>
            <person name="Nakauchi H."/>
            <person name="Ng P."/>
            <person name="Nilsson R."/>
            <person name="Nishiguchi S."/>
            <person name="Nishikawa S."/>
            <person name="Nori F."/>
            <person name="Ohara O."/>
            <person name="Okazaki Y."/>
            <person name="Orlando V."/>
            <person name="Pang K.C."/>
            <person name="Pavan W.J."/>
            <person name="Pavesi G."/>
            <person name="Pesole G."/>
            <person name="Petrovsky N."/>
            <person name="Piazza S."/>
            <person name="Reed J."/>
            <person name="Reid J.F."/>
            <person name="Ring B.Z."/>
            <person name="Ringwald M."/>
            <person name="Rost B."/>
            <person name="Ruan Y."/>
            <person name="Salzberg S.L."/>
            <person name="Sandelin A."/>
            <person name="Schneider C."/>
            <person name="Schoenbach C."/>
            <person name="Sekiguchi K."/>
            <person name="Semple C.A."/>
            <person name="Seno S."/>
            <person name="Sessa L."/>
            <person name="Sheng Y."/>
            <person name="Shibata Y."/>
            <person name="Shimada H."/>
            <person name="Shimada K."/>
            <person name="Silva D."/>
            <person name="Sinclair B."/>
            <person name="Sperling S."/>
            <person name="Stupka E."/>
            <person name="Sugiura K."/>
            <person name="Sultana R."/>
            <person name="Takenaka Y."/>
            <person name="Taki K."/>
            <person name="Tammoja K."/>
            <person name="Tan S.L."/>
            <person name="Tang S."/>
            <person name="Taylor M.S."/>
            <person name="Tegner J."/>
            <person name="Teichmann S.A."/>
            <person name="Ueda H.R."/>
            <person name="van Nimwegen E."/>
            <person name="Verardo R."/>
            <person name="Wei C.L."/>
            <person name="Yagi K."/>
            <person name="Yamanishi H."/>
            <person name="Zabarovsky E."/>
            <person name="Zhu S."/>
            <person name="Zimmer A."/>
            <person name="Hide W."/>
            <person name="Bult C."/>
            <person name="Grimmond S.M."/>
            <person name="Teasdale R.D."/>
            <person name="Liu E.T."/>
            <person name="Brusic V."/>
            <person name="Quackenbush J."/>
            <person name="Wahlestedt C."/>
            <person name="Mattick J.S."/>
            <person name="Hume D.A."/>
            <person name="Kai C."/>
            <person name="Sasaki D."/>
            <person name="Tomaru Y."/>
            <person name="Fukuda S."/>
            <person name="Kanamori-Katayama M."/>
            <person name="Suzuki M."/>
            <person name="Aoki J."/>
            <person name="Arakawa T."/>
            <person name="Iida J."/>
            <person name="Imamura K."/>
            <person name="Itoh M."/>
            <person name="Kato T."/>
            <person name="Kawaji H."/>
            <person name="Kawagashira N."/>
            <person name="Kawashima T."/>
            <person name="Kojima M."/>
            <person name="Kondo S."/>
            <person name="Konno H."/>
            <person name="Nakano K."/>
            <person name="Ninomiya N."/>
            <person name="Nishio T."/>
            <person name="Okada M."/>
            <person name="Plessy C."/>
            <person name="Shibata K."/>
            <person name="Shiraki T."/>
            <person name="Suzuki S."/>
            <person name="Tagami M."/>
            <person name="Waki K."/>
            <person name="Watahiki A."/>
            <person name="Okamura-Oho Y."/>
            <person name="Suzuki H."/>
            <person name="Kawai J."/>
            <person name="Hayashizaki Y."/>
        </authorList>
    </citation>
    <scope>NUCLEOTIDE SEQUENCE [LARGE SCALE MRNA] (ISOFORM 1)</scope>
    <source>
        <strain>C57BL/6J</strain>
        <tissue>Retina</tissue>
    </source>
</reference>
<reference key="2">
    <citation type="journal article" date="2009" name="PLoS Biol.">
        <title>Lineage-specific biology revealed by a finished genome assembly of the mouse.</title>
        <authorList>
            <person name="Church D.M."/>
            <person name="Goodstadt L."/>
            <person name="Hillier L.W."/>
            <person name="Zody M.C."/>
            <person name="Goldstein S."/>
            <person name="She X."/>
            <person name="Bult C.J."/>
            <person name="Agarwala R."/>
            <person name="Cherry J.L."/>
            <person name="DiCuccio M."/>
            <person name="Hlavina W."/>
            <person name="Kapustin Y."/>
            <person name="Meric P."/>
            <person name="Maglott D."/>
            <person name="Birtle Z."/>
            <person name="Marques A.C."/>
            <person name="Graves T."/>
            <person name="Zhou S."/>
            <person name="Teague B."/>
            <person name="Potamousis K."/>
            <person name="Churas C."/>
            <person name="Place M."/>
            <person name="Herschleb J."/>
            <person name="Runnheim R."/>
            <person name="Forrest D."/>
            <person name="Amos-Landgraf J."/>
            <person name="Schwartz D.C."/>
            <person name="Cheng Z."/>
            <person name="Lindblad-Toh K."/>
            <person name="Eichler E.E."/>
            <person name="Ponting C.P."/>
        </authorList>
    </citation>
    <scope>NUCLEOTIDE SEQUENCE [LARGE SCALE GENOMIC DNA]</scope>
    <source>
        <strain>C57BL/6J</strain>
    </source>
</reference>
<reference key="3">
    <citation type="journal article" date="2004" name="Genome Res.">
        <title>The status, quality, and expansion of the NIH full-length cDNA project: the Mammalian Gene Collection (MGC).</title>
        <authorList>
            <consortium name="The MGC Project Team"/>
        </authorList>
    </citation>
    <scope>NUCLEOTIDE SEQUENCE [LARGE SCALE MRNA] (ISOFORM 2)</scope>
</reference>
<proteinExistence type="evidence at transcript level"/>
<keyword id="KW-0025">Alternative splicing</keyword>
<keyword id="KW-0479">Metal-binding</keyword>
<keyword id="KW-0539">Nucleus</keyword>
<keyword id="KW-1185">Reference proteome</keyword>
<keyword id="KW-0677">Repeat</keyword>
<keyword id="KW-0862">Zinc</keyword>
<keyword id="KW-0863">Zinc-finger</keyword>